<sequence length="377" mass="40501">MAITVNTNVAALVAQRHLTSATDMLNQSMERLSSGKRINSAKDDAAGLQISNRLQSQMSGLDVAVRNANDGISIMQTAEGAMNEVTNIMQRMRDLSLQSANGSNSQVERTALQEEVTALNDELNRIAETTSFGGRKLLNGAFGKSSFQIGAASGEAVQIELKSMRTDGLEMGGFSYVAQGRADSDWQVKENANDLTMSFINRSGETEKIQINAKSGDDIEELATYINGQTDKVTASVNEKGQLQIFMAGEDTAGTISFSGDLASELGMSLKGYDAVNNLNITTVGGAQQAVAVLDTAMKFVDSQRAELGAYQNRFNHAINNLDNIHENLAASNSRIQDTDYAKETTQMVKQQILQQVSTTILAQAKQAPNLALTLLG</sequence>
<feature type="chain" id="PRO_0000182657" description="Polar flagellin F">
    <location>
        <begin position="1"/>
        <end position="377"/>
    </location>
</feature>
<feature type="coiled-coil region" evidence="1">
    <location>
        <begin position="98"/>
        <end position="131"/>
    </location>
</feature>
<feature type="coiled-coil region" evidence="1">
    <location>
        <begin position="302"/>
        <end position="339"/>
    </location>
</feature>
<feature type="sequence conflict" description="In Ref. 1; AAC27808." evidence="2" ref="1">
    <original>S</original>
    <variation>R</variation>
    <location>
        <position position="59"/>
    </location>
</feature>
<feature type="sequence conflict" description="In Ref. 1; AAC27808." evidence="2" ref="1">
    <original>V</original>
    <variation>A</variation>
    <location>
        <position position="107"/>
    </location>
</feature>
<feature type="sequence conflict" description="In Ref. 1; AAC27808." evidence="2" ref="1">
    <original>A</original>
    <variation>T</variation>
    <location>
        <position position="141"/>
    </location>
</feature>
<feature type="sequence conflict" description="In Ref. 1; AAC27808." evidence="2" ref="1">
    <original>I</original>
    <variation>T</variation>
    <location>
        <position position="200"/>
    </location>
</feature>
<feature type="sequence conflict" description="In Ref. 1; AAC27808." evidence="2" ref="1">
    <original>S</original>
    <variation>A</variation>
    <location>
        <position position="215"/>
    </location>
</feature>
<feature type="sequence conflict" description="In Ref. 1; AAC27808." evidence="2" ref="1">
    <original>D</original>
    <variation>E</variation>
    <location>
        <position position="251"/>
    </location>
</feature>
<keyword id="KW-0975">Bacterial flagellum</keyword>
<keyword id="KW-0175">Coiled coil</keyword>
<keyword id="KW-0964">Secreted</keyword>
<protein>
    <recommendedName>
        <fullName>Polar flagellin F</fullName>
    </recommendedName>
</protein>
<comment type="function">
    <text>Flagellin is the subunit protein which polymerizes to form the filaments of bacterial flagella.</text>
</comment>
<comment type="subunit">
    <text>Heteromer of multiple flagellin subunits including FlaA, FlaB/D, FlaC, FlaE and FlaF.</text>
</comment>
<comment type="subcellular location">
    <subcellularLocation>
        <location>Secreted</location>
    </subcellularLocation>
    <subcellularLocation>
        <location>Bacterial flagellum</location>
    </subcellularLocation>
</comment>
<comment type="miscellaneous">
    <text>V.parahaemolyticus possesses two flagellar systems: a single polar flagellum propels the bacterium in liquid (swimming), while multiple lateral (peritrichous) flagella move the bacterium over surfaces (swarming). The polar flagellum is synthesized constitutively but lateral flagella are produced only under conditions in which the polar flagellum is not functional.</text>
</comment>
<comment type="similarity">
    <text evidence="2">Belongs to the bacterial flagellin family.</text>
</comment>
<proteinExistence type="inferred from homology"/>
<reference key="1">
    <citation type="journal article" date="2000" name="J. Bacteriol.">
        <title>Analysis of the polar flagellar gene system of Vibrio parahaemolyticus.</title>
        <authorList>
            <person name="Kim Y.-K."/>
            <person name="McCarter L.L."/>
        </authorList>
    </citation>
    <scope>NUCLEOTIDE SEQUENCE [GENOMIC DNA]</scope>
    <source>
        <strain>BB22</strain>
    </source>
</reference>
<reference key="2">
    <citation type="journal article" date="2003" name="Lancet">
        <title>Genome sequence of Vibrio parahaemolyticus: a pathogenic mechanism distinct from that of V. cholerae.</title>
        <authorList>
            <person name="Makino K."/>
            <person name="Oshima K."/>
            <person name="Kurokawa K."/>
            <person name="Yokoyama K."/>
            <person name="Uda T."/>
            <person name="Tagomori K."/>
            <person name="Iijima Y."/>
            <person name="Najima M."/>
            <person name="Nakano M."/>
            <person name="Yamashita A."/>
            <person name="Kubota Y."/>
            <person name="Kimura S."/>
            <person name="Yasunaga T."/>
            <person name="Honda T."/>
            <person name="Shinagawa H."/>
            <person name="Hattori M."/>
            <person name="Iida T."/>
        </authorList>
    </citation>
    <scope>NUCLEOTIDE SEQUENCE [LARGE SCALE GENOMIC DNA]</scope>
    <source>
        <strain>RIMD 2210633</strain>
    </source>
</reference>
<evidence type="ECO:0000255" key="1"/>
<evidence type="ECO:0000305" key="2"/>
<dbReference type="EMBL" id="AF069392">
    <property type="protein sequence ID" value="AAC27808.1"/>
    <property type="molecule type" value="Genomic_DNA"/>
</dbReference>
<dbReference type="EMBL" id="BA000031">
    <property type="protein sequence ID" value="BAC60524.1"/>
    <property type="molecule type" value="Genomic_DNA"/>
</dbReference>
<dbReference type="RefSeq" id="NP_798640.1">
    <property type="nucleotide sequence ID" value="NC_004603.1"/>
</dbReference>
<dbReference type="RefSeq" id="WP_005481067.1">
    <property type="nucleotide sequence ID" value="NC_004603.1"/>
</dbReference>
<dbReference type="SMR" id="O87081"/>
<dbReference type="GeneID" id="1189774"/>
<dbReference type="KEGG" id="vpa:VP2261"/>
<dbReference type="PATRIC" id="fig|223926.6.peg.2164"/>
<dbReference type="eggNOG" id="COG1344">
    <property type="taxonomic scope" value="Bacteria"/>
</dbReference>
<dbReference type="HOGENOM" id="CLU_011142_7_2_6"/>
<dbReference type="Proteomes" id="UP000002493">
    <property type="component" value="Chromosome 1"/>
</dbReference>
<dbReference type="GO" id="GO:0009288">
    <property type="term" value="C:bacterial-type flagellum"/>
    <property type="evidence" value="ECO:0007669"/>
    <property type="project" value="UniProtKB-SubCell"/>
</dbReference>
<dbReference type="GO" id="GO:0005576">
    <property type="term" value="C:extracellular region"/>
    <property type="evidence" value="ECO:0007669"/>
    <property type="project" value="UniProtKB-SubCell"/>
</dbReference>
<dbReference type="GO" id="GO:0005198">
    <property type="term" value="F:structural molecule activity"/>
    <property type="evidence" value="ECO:0007669"/>
    <property type="project" value="InterPro"/>
</dbReference>
<dbReference type="Gene3D" id="2.60.40.4390">
    <property type="match status" value="1"/>
</dbReference>
<dbReference type="Gene3D" id="6.10.280.190">
    <property type="match status" value="1"/>
</dbReference>
<dbReference type="Gene3D" id="1.20.1330.10">
    <property type="entry name" value="f41 fragment of flagellin, N-terminal domain"/>
    <property type="match status" value="1"/>
</dbReference>
<dbReference type="Gene3D" id="6.10.10.10">
    <property type="entry name" value="Flagellar export chaperone, C-terminal domain"/>
    <property type="match status" value="1"/>
</dbReference>
<dbReference type="InterPro" id="IPR001492">
    <property type="entry name" value="Flagellin"/>
</dbReference>
<dbReference type="InterPro" id="IPR046358">
    <property type="entry name" value="Flagellin_C"/>
</dbReference>
<dbReference type="InterPro" id="IPR042187">
    <property type="entry name" value="Flagellin_C_sub2"/>
</dbReference>
<dbReference type="InterPro" id="IPR010810">
    <property type="entry name" value="Flagellin_hook_IN_motif"/>
</dbReference>
<dbReference type="InterPro" id="IPR001029">
    <property type="entry name" value="Flagellin_N"/>
</dbReference>
<dbReference type="NCBIfam" id="NF006466">
    <property type="entry name" value="PRK08869.1-1"/>
    <property type="match status" value="1"/>
</dbReference>
<dbReference type="NCBIfam" id="NF006468">
    <property type="entry name" value="PRK08869.1-3"/>
    <property type="match status" value="1"/>
</dbReference>
<dbReference type="NCBIfam" id="NF006469">
    <property type="entry name" value="PRK08869.1-4"/>
    <property type="match status" value="1"/>
</dbReference>
<dbReference type="PANTHER" id="PTHR42792">
    <property type="entry name" value="FLAGELLIN"/>
    <property type="match status" value="1"/>
</dbReference>
<dbReference type="PANTHER" id="PTHR42792:SF2">
    <property type="entry name" value="FLAGELLIN"/>
    <property type="match status" value="1"/>
</dbReference>
<dbReference type="Pfam" id="PF00700">
    <property type="entry name" value="Flagellin_C"/>
    <property type="match status" value="1"/>
</dbReference>
<dbReference type="Pfam" id="PF07196">
    <property type="entry name" value="Flagellin_IN"/>
    <property type="match status" value="1"/>
</dbReference>
<dbReference type="Pfam" id="PF00669">
    <property type="entry name" value="Flagellin_N"/>
    <property type="match status" value="1"/>
</dbReference>
<dbReference type="PRINTS" id="PR00207">
    <property type="entry name" value="FLAGELLIN"/>
</dbReference>
<dbReference type="SUPFAM" id="SSF64518">
    <property type="entry name" value="Phase 1 flagellin"/>
    <property type="match status" value="1"/>
</dbReference>
<name>FLAF_VIBPA</name>
<gene>
    <name type="primary">flaF</name>
    <name type="ordered locus">VP2261</name>
</gene>
<accession>O87081</accession>
<organism>
    <name type="scientific">Vibrio parahaemolyticus serotype O3:K6 (strain RIMD 2210633)</name>
    <dbReference type="NCBI Taxonomy" id="223926"/>
    <lineage>
        <taxon>Bacteria</taxon>
        <taxon>Pseudomonadati</taxon>
        <taxon>Pseudomonadota</taxon>
        <taxon>Gammaproteobacteria</taxon>
        <taxon>Vibrionales</taxon>
        <taxon>Vibrionaceae</taxon>
        <taxon>Vibrio</taxon>
    </lineage>
</organism>